<sequence>MWSDPIADMLTRIRNANAAFKESVDLPASNMKRAILEILKKEGYIEDYKYIEDGKQGILKVFLKYKGDRRNRQRVISGIVRVSKPGRRIYVSKDELPKVKSGMGIAVISTSKGIITDKEARKKNVGGEVICYVW</sequence>
<evidence type="ECO:0000255" key="1">
    <source>
        <dbReference type="HAMAP-Rule" id="MF_01302"/>
    </source>
</evidence>
<evidence type="ECO:0000305" key="2"/>
<reference key="1">
    <citation type="submission" date="2009-06" db="EMBL/GenBank/DDBJ databases">
        <title>Complete sequence of Thermotogales bacterium TBF 19.5.1.</title>
        <authorList>
            <consortium name="US DOE Joint Genome Institute"/>
            <person name="Lucas S."/>
            <person name="Copeland A."/>
            <person name="Lapidus A."/>
            <person name="Glavina del Rio T."/>
            <person name="Tice H."/>
            <person name="Bruce D."/>
            <person name="Goodwin L."/>
            <person name="Pitluck S."/>
            <person name="Chertkov O."/>
            <person name="Brettin T."/>
            <person name="Detter J.C."/>
            <person name="Han C."/>
            <person name="Schmutz J."/>
            <person name="Larimer F."/>
            <person name="Land M."/>
            <person name="Hauser L."/>
            <person name="Kyrpides N."/>
            <person name="Ovchinnikova G."/>
            <person name="Noll K."/>
        </authorList>
    </citation>
    <scope>NUCLEOTIDE SEQUENCE [LARGE SCALE GENOMIC DNA]</scope>
    <source>
        <strain>ATCC BAA-1733 / DSM 21960 / TBF 19.5.1</strain>
    </source>
</reference>
<name>RS8_KOSOT</name>
<feature type="chain" id="PRO_1000214256" description="Small ribosomal subunit protein uS8">
    <location>
        <begin position="1"/>
        <end position="134"/>
    </location>
</feature>
<comment type="function">
    <text evidence="1">One of the primary rRNA binding proteins, it binds directly to 16S rRNA central domain where it helps coordinate assembly of the platform of the 30S subunit.</text>
</comment>
<comment type="subunit">
    <text evidence="1">Part of the 30S ribosomal subunit. Contacts proteins S5 and S12.</text>
</comment>
<comment type="similarity">
    <text evidence="1">Belongs to the universal ribosomal protein uS8 family.</text>
</comment>
<keyword id="KW-1185">Reference proteome</keyword>
<keyword id="KW-0687">Ribonucleoprotein</keyword>
<keyword id="KW-0689">Ribosomal protein</keyword>
<keyword id="KW-0694">RNA-binding</keyword>
<keyword id="KW-0699">rRNA-binding</keyword>
<gene>
    <name evidence="1" type="primary">rpsH</name>
    <name type="ordered locus">Kole_1888</name>
</gene>
<protein>
    <recommendedName>
        <fullName evidence="1">Small ribosomal subunit protein uS8</fullName>
    </recommendedName>
    <alternativeName>
        <fullName evidence="2">30S ribosomal protein S8</fullName>
    </alternativeName>
</protein>
<proteinExistence type="inferred from homology"/>
<accession>C5CGI8</accession>
<organism>
    <name type="scientific">Kosmotoga olearia (strain ATCC BAA-1733 / DSM 21960 / TBF 19.5.1)</name>
    <dbReference type="NCBI Taxonomy" id="521045"/>
    <lineage>
        <taxon>Bacteria</taxon>
        <taxon>Thermotogati</taxon>
        <taxon>Thermotogota</taxon>
        <taxon>Thermotogae</taxon>
        <taxon>Kosmotogales</taxon>
        <taxon>Kosmotogaceae</taxon>
        <taxon>Kosmotoga</taxon>
    </lineage>
</organism>
<dbReference type="EMBL" id="CP001634">
    <property type="protein sequence ID" value="ACR80569.1"/>
    <property type="molecule type" value="Genomic_DNA"/>
</dbReference>
<dbReference type="RefSeq" id="WP_015869212.1">
    <property type="nucleotide sequence ID" value="NC_012785.1"/>
</dbReference>
<dbReference type="SMR" id="C5CGI8"/>
<dbReference type="STRING" id="521045.Kole_1888"/>
<dbReference type="KEGG" id="kol:Kole_1888"/>
<dbReference type="eggNOG" id="COG0096">
    <property type="taxonomic scope" value="Bacteria"/>
</dbReference>
<dbReference type="HOGENOM" id="CLU_098428_0_2_0"/>
<dbReference type="OrthoDB" id="9802617at2"/>
<dbReference type="Proteomes" id="UP000002382">
    <property type="component" value="Chromosome"/>
</dbReference>
<dbReference type="GO" id="GO:1990904">
    <property type="term" value="C:ribonucleoprotein complex"/>
    <property type="evidence" value="ECO:0007669"/>
    <property type="project" value="UniProtKB-KW"/>
</dbReference>
<dbReference type="GO" id="GO:0005840">
    <property type="term" value="C:ribosome"/>
    <property type="evidence" value="ECO:0007669"/>
    <property type="project" value="UniProtKB-KW"/>
</dbReference>
<dbReference type="GO" id="GO:0019843">
    <property type="term" value="F:rRNA binding"/>
    <property type="evidence" value="ECO:0007669"/>
    <property type="project" value="UniProtKB-UniRule"/>
</dbReference>
<dbReference type="GO" id="GO:0003735">
    <property type="term" value="F:structural constituent of ribosome"/>
    <property type="evidence" value="ECO:0007669"/>
    <property type="project" value="InterPro"/>
</dbReference>
<dbReference type="GO" id="GO:0006412">
    <property type="term" value="P:translation"/>
    <property type="evidence" value="ECO:0007669"/>
    <property type="project" value="UniProtKB-UniRule"/>
</dbReference>
<dbReference type="FunFam" id="3.30.1370.30:FF:000002">
    <property type="entry name" value="30S ribosomal protein S8"/>
    <property type="match status" value="1"/>
</dbReference>
<dbReference type="FunFam" id="3.30.1490.10:FF:000001">
    <property type="entry name" value="30S ribosomal protein S8"/>
    <property type="match status" value="1"/>
</dbReference>
<dbReference type="Gene3D" id="3.30.1370.30">
    <property type="match status" value="1"/>
</dbReference>
<dbReference type="Gene3D" id="3.30.1490.10">
    <property type="match status" value="1"/>
</dbReference>
<dbReference type="HAMAP" id="MF_01302_B">
    <property type="entry name" value="Ribosomal_uS8_B"/>
    <property type="match status" value="1"/>
</dbReference>
<dbReference type="InterPro" id="IPR000630">
    <property type="entry name" value="Ribosomal_uS8"/>
</dbReference>
<dbReference type="InterPro" id="IPR047863">
    <property type="entry name" value="Ribosomal_uS8_CS"/>
</dbReference>
<dbReference type="InterPro" id="IPR035987">
    <property type="entry name" value="Ribosomal_uS8_sf"/>
</dbReference>
<dbReference type="NCBIfam" id="NF001109">
    <property type="entry name" value="PRK00136.1"/>
    <property type="match status" value="1"/>
</dbReference>
<dbReference type="PANTHER" id="PTHR11758">
    <property type="entry name" value="40S RIBOSOMAL PROTEIN S15A"/>
    <property type="match status" value="1"/>
</dbReference>
<dbReference type="Pfam" id="PF00410">
    <property type="entry name" value="Ribosomal_S8"/>
    <property type="match status" value="1"/>
</dbReference>
<dbReference type="SUPFAM" id="SSF56047">
    <property type="entry name" value="Ribosomal protein S8"/>
    <property type="match status" value="1"/>
</dbReference>
<dbReference type="PROSITE" id="PS00053">
    <property type="entry name" value="RIBOSOMAL_S8"/>
    <property type="match status" value="1"/>
</dbReference>